<reference key="1">
    <citation type="journal article" date="2001" name="Science">
        <title>The genome of the natural genetic engineer Agrobacterium tumefaciens C58.</title>
        <authorList>
            <person name="Wood D.W."/>
            <person name="Setubal J.C."/>
            <person name="Kaul R."/>
            <person name="Monks D.E."/>
            <person name="Kitajima J.P."/>
            <person name="Okura V.K."/>
            <person name="Zhou Y."/>
            <person name="Chen L."/>
            <person name="Wood G.E."/>
            <person name="Almeida N.F. Jr."/>
            <person name="Woo L."/>
            <person name="Chen Y."/>
            <person name="Paulsen I.T."/>
            <person name="Eisen J.A."/>
            <person name="Karp P.D."/>
            <person name="Bovee D. Sr."/>
            <person name="Chapman P."/>
            <person name="Clendenning J."/>
            <person name="Deatherage G."/>
            <person name="Gillet W."/>
            <person name="Grant C."/>
            <person name="Kutyavin T."/>
            <person name="Levy R."/>
            <person name="Li M.-J."/>
            <person name="McClelland E."/>
            <person name="Palmieri A."/>
            <person name="Raymond C."/>
            <person name="Rouse G."/>
            <person name="Saenphimmachak C."/>
            <person name="Wu Z."/>
            <person name="Romero P."/>
            <person name="Gordon D."/>
            <person name="Zhang S."/>
            <person name="Yoo H."/>
            <person name="Tao Y."/>
            <person name="Biddle P."/>
            <person name="Jung M."/>
            <person name="Krespan W."/>
            <person name="Perry M."/>
            <person name="Gordon-Kamm B."/>
            <person name="Liao L."/>
            <person name="Kim S."/>
            <person name="Hendrick C."/>
            <person name="Zhao Z.-Y."/>
            <person name="Dolan M."/>
            <person name="Chumley F."/>
            <person name="Tingey S.V."/>
            <person name="Tomb J.-F."/>
            <person name="Gordon M.P."/>
            <person name="Olson M.V."/>
            <person name="Nester E.W."/>
        </authorList>
    </citation>
    <scope>NUCLEOTIDE SEQUENCE [LARGE SCALE GENOMIC DNA]</scope>
    <source>
        <strain>C58 / ATCC 33970</strain>
    </source>
</reference>
<reference key="2">
    <citation type="journal article" date="2001" name="Science">
        <title>Genome sequence of the plant pathogen and biotechnology agent Agrobacterium tumefaciens C58.</title>
        <authorList>
            <person name="Goodner B."/>
            <person name="Hinkle G."/>
            <person name="Gattung S."/>
            <person name="Miller N."/>
            <person name="Blanchard M."/>
            <person name="Qurollo B."/>
            <person name="Goldman B.S."/>
            <person name="Cao Y."/>
            <person name="Askenazi M."/>
            <person name="Halling C."/>
            <person name="Mullin L."/>
            <person name="Houmiel K."/>
            <person name="Gordon J."/>
            <person name="Vaudin M."/>
            <person name="Iartchouk O."/>
            <person name="Epp A."/>
            <person name="Liu F."/>
            <person name="Wollam C."/>
            <person name="Allinger M."/>
            <person name="Doughty D."/>
            <person name="Scott C."/>
            <person name="Lappas C."/>
            <person name="Markelz B."/>
            <person name="Flanagan C."/>
            <person name="Crowell C."/>
            <person name="Gurson J."/>
            <person name="Lomo C."/>
            <person name="Sear C."/>
            <person name="Strub G."/>
            <person name="Cielo C."/>
            <person name="Slater S."/>
        </authorList>
    </citation>
    <scope>NUCLEOTIDE SEQUENCE [LARGE SCALE GENOMIC DNA]</scope>
    <source>
        <strain>C58 / ATCC 33970</strain>
    </source>
</reference>
<evidence type="ECO:0000255" key="1">
    <source>
        <dbReference type="HAMAP-Rule" id="MF_01318"/>
    </source>
</evidence>
<evidence type="ECO:0000305" key="2"/>
<proteinExistence type="inferred from homology"/>
<keyword id="KW-1185">Reference proteome</keyword>
<keyword id="KW-0678">Repressor</keyword>
<keyword id="KW-0687">Ribonucleoprotein</keyword>
<keyword id="KW-0689">Ribosomal protein</keyword>
<keyword id="KW-0694">RNA-binding</keyword>
<keyword id="KW-0699">rRNA-binding</keyword>
<keyword id="KW-0810">Translation regulation</keyword>
<keyword id="KW-0820">tRNA-binding</keyword>
<dbReference type="EMBL" id="AE007869">
    <property type="protein sequence ID" value="AAK87719.2"/>
    <property type="molecule type" value="Genomic_DNA"/>
</dbReference>
<dbReference type="PIR" id="AE2817">
    <property type="entry name" value="AE2817"/>
</dbReference>
<dbReference type="PIR" id="F97595">
    <property type="entry name" value="F97595"/>
</dbReference>
<dbReference type="RefSeq" id="NP_354934.2">
    <property type="nucleotide sequence ID" value="NC_003062.2"/>
</dbReference>
<dbReference type="RefSeq" id="WP_010971967.1">
    <property type="nucleotide sequence ID" value="NC_003062.2"/>
</dbReference>
<dbReference type="SMR" id="Q8UE05"/>
<dbReference type="STRING" id="176299.Atu1959"/>
<dbReference type="EnsemblBacteria" id="AAK87719">
    <property type="protein sequence ID" value="AAK87719"/>
    <property type="gene ID" value="Atu1959"/>
</dbReference>
<dbReference type="GeneID" id="1133997"/>
<dbReference type="KEGG" id="atu:Atu1959"/>
<dbReference type="PATRIC" id="fig|176299.10.peg.1972"/>
<dbReference type="eggNOG" id="COG0081">
    <property type="taxonomic scope" value="Bacteria"/>
</dbReference>
<dbReference type="HOGENOM" id="CLU_062853_0_0_5"/>
<dbReference type="OrthoDB" id="9803740at2"/>
<dbReference type="PhylomeDB" id="Q8UE05"/>
<dbReference type="BioCyc" id="AGRO:ATU1959-MONOMER"/>
<dbReference type="Proteomes" id="UP000000813">
    <property type="component" value="Chromosome circular"/>
</dbReference>
<dbReference type="GO" id="GO:0022625">
    <property type="term" value="C:cytosolic large ribosomal subunit"/>
    <property type="evidence" value="ECO:0007669"/>
    <property type="project" value="TreeGrafter"/>
</dbReference>
<dbReference type="GO" id="GO:0019843">
    <property type="term" value="F:rRNA binding"/>
    <property type="evidence" value="ECO:0007669"/>
    <property type="project" value="UniProtKB-UniRule"/>
</dbReference>
<dbReference type="GO" id="GO:0003735">
    <property type="term" value="F:structural constituent of ribosome"/>
    <property type="evidence" value="ECO:0007669"/>
    <property type="project" value="InterPro"/>
</dbReference>
<dbReference type="GO" id="GO:0000049">
    <property type="term" value="F:tRNA binding"/>
    <property type="evidence" value="ECO:0007669"/>
    <property type="project" value="UniProtKB-KW"/>
</dbReference>
<dbReference type="GO" id="GO:0006417">
    <property type="term" value="P:regulation of translation"/>
    <property type="evidence" value="ECO:0007669"/>
    <property type="project" value="UniProtKB-KW"/>
</dbReference>
<dbReference type="GO" id="GO:0006412">
    <property type="term" value="P:translation"/>
    <property type="evidence" value="ECO:0007669"/>
    <property type="project" value="UniProtKB-UniRule"/>
</dbReference>
<dbReference type="CDD" id="cd00403">
    <property type="entry name" value="Ribosomal_L1"/>
    <property type="match status" value="1"/>
</dbReference>
<dbReference type="FunFam" id="3.40.50.790:FF:000001">
    <property type="entry name" value="50S ribosomal protein L1"/>
    <property type="match status" value="1"/>
</dbReference>
<dbReference type="Gene3D" id="3.30.190.20">
    <property type="match status" value="1"/>
</dbReference>
<dbReference type="Gene3D" id="3.40.50.790">
    <property type="match status" value="1"/>
</dbReference>
<dbReference type="HAMAP" id="MF_01318_B">
    <property type="entry name" value="Ribosomal_uL1_B"/>
    <property type="match status" value="1"/>
</dbReference>
<dbReference type="InterPro" id="IPR005878">
    <property type="entry name" value="Ribosom_uL1_bac-type"/>
</dbReference>
<dbReference type="InterPro" id="IPR002143">
    <property type="entry name" value="Ribosomal_uL1"/>
</dbReference>
<dbReference type="InterPro" id="IPR023674">
    <property type="entry name" value="Ribosomal_uL1-like"/>
</dbReference>
<dbReference type="InterPro" id="IPR028364">
    <property type="entry name" value="Ribosomal_uL1/biogenesis"/>
</dbReference>
<dbReference type="InterPro" id="IPR016095">
    <property type="entry name" value="Ribosomal_uL1_3-a/b-sand"/>
</dbReference>
<dbReference type="InterPro" id="IPR023673">
    <property type="entry name" value="Ribosomal_uL1_CS"/>
</dbReference>
<dbReference type="NCBIfam" id="TIGR01169">
    <property type="entry name" value="rplA_bact"/>
    <property type="match status" value="1"/>
</dbReference>
<dbReference type="PANTHER" id="PTHR36427">
    <property type="entry name" value="54S RIBOSOMAL PROTEIN L1, MITOCHONDRIAL"/>
    <property type="match status" value="1"/>
</dbReference>
<dbReference type="PANTHER" id="PTHR36427:SF3">
    <property type="entry name" value="LARGE RIBOSOMAL SUBUNIT PROTEIN UL1M"/>
    <property type="match status" value="1"/>
</dbReference>
<dbReference type="Pfam" id="PF00687">
    <property type="entry name" value="Ribosomal_L1"/>
    <property type="match status" value="1"/>
</dbReference>
<dbReference type="PIRSF" id="PIRSF002155">
    <property type="entry name" value="Ribosomal_L1"/>
    <property type="match status" value="1"/>
</dbReference>
<dbReference type="SUPFAM" id="SSF56808">
    <property type="entry name" value="Ribosomal protein L1"/>
    <property type="match status" value="1"/>
</dbReference>
<dbReference type="PROSITE" id="PS01199">
    <property type="entry name" value="RIBOSOMAL_L1"/>
    <property type="match status" value="1"/>
</dbReference>
<protein>
    <recommendedName>
        <fullName evidence="1">Large ribosomal subunit protein uL1</fullName>
    </recommendedName>
    <alternativeName>
        <fullName evidence="2">50S ribosomal protein L1</fullName>
    </alternativeName>
</protein>
<gene>
    <name evidence="1" type="primary">rplA</name>
    <name type="ordered locus">Atu1959</name>
    <name type="ORF">AGR_C_3573</name>
</gene>
<organism>
    <name type="scientific">Agrobacterium fabrum (strain C58 / ATCC 33970)</name>
    <name type="common">Agrobacterium tumefaciens (strain C58)</name>
    <dbReference type="NCBI Taxonomy" id="176299"/>
    <lineage>
        <taxon>Bacteria</taxon>
        <taxon>Pseudomonadati</taxon>
        <taxon>Pseudomonadota</taxon>
        <taxon>Alphaproteobacteria</taxon>
        <taxon>Hyphomicrobiales</taxon>
        <taxon>Rhizobiaceae</taxon>
        <taxon>Rhizobium/Agrobacterium group</taxon>
        <taxon>Agrobacterium</taxon>
        <taxon>Agrobacterium tumefaciens complex</taxon>
    </lineage>
</organism>
<comment type="function">
    <text evidence="1">Binds directly to 23S rRNA. The L1 stalk is quite mobile in the ribosome, and is involved in E site tRNA release.</text>
</comment>
<comment type="function">
    <text evidence="1">Protein L1 is also a translational repressor protein, it controls the translation of the L11 operon by binding to its mRNA.</text>
</comment>
<comment type="subunit">
    <text evidence="1">Part of the 50S ribosomal subunit.</text>
</comment>
<comment type="similarity">
    <text evidence="1">Belongs to the universal ribosomal protein uL1 family.</text>
</comment>
<accession>Q8UE05</accession>
<name>RL1_AGRFC</name>
<feature type="chain" id="PRO_0000125603" description="Large ribosomal subunit protein uL1">
    <location>
        <begin position="1"/>
        <end position="231"/>
    </location>
</feature>
<sequence>MAKVAKRIQKIREGVDPNKLYVLTDAISMVKERAVAKFDETVEVSMNLGVDPRHADQMVRGVVNLPNGTGRDVRVAVFARGVKADEATAAGADVVGAEELVEIVQGGKIDFDRCIATPDMMPLVGRLGKVLGPRGMMPNPKVGTVTMDVAGAVKASKGGAVEFRVEKAGIVHAGIGKASFDAKALEENIKAFADAVIKAKPTGAKGNYVKRVAISSTMGPGVKIEPSSVTA</sequence>